<accession>Q5R580</accession>
<comment type="function">
    <text evidence="1 2">Splice factor required for alternative splicing of TRA2B/SFRS10 transcripts. Binds to ssRNA containing the consensus sequence 5'-AGGUAA-3' (By similarity). May interfere with constitutive 5'-splice site selection (By similarity).</text>
</comment>
<comment type="subunit">
    <text evidence="1">Interacts with the C-terminal half of SNRP70/U1-70K, the Arg/Ser-rich domain of AKAP17A as well as with U2AF1 and CLK1.</text>
</comment>
<comment type="subcellular location">
    <subcellularLocation>
        <location evidence="2">Nucleus</location>
    </subcellularLocation>
</comment>
<comment type="domain">
    <text evidence="2">The RanBP2-type zinc fingers mediate binding to RNA.</text>
</comment>
<comment type="PTM">
    <text evidence="1">Phosphorylated on Ser-310 upon DNA damage, probably by ATM or ATR.</text>
</comment>
<comment type="similarity">
    <text evidence="4">Belongs to the ZRANB2 family.</text>
</comment>
<feature type="chain" id="PRO_0000285985" description="Zinc finger Ran-binding domain-containing protein 2">
    <location>
        <begin position="1"/>
        <end position="320"/>
    </location>
</feature>
<feature type="zinc finger region" description="RanBP2-type 1" evidence="5">
    <location>
        <begin position="9"/>
        <end position="40"/>
    </location>
</feature>
<feature type="zinc finger region" description="RanBP2-type 2" evidence="5">
    <location>
        <begin position="65"/>
        <end position="94"/>
    </location>
</feature>
<feature type="region of interest" description="Disordered" evidence="6">
    <location>
        <begin position="117"/>
        <end position="320"/>
    </location>
</feature>
<feature type="region of interest" description="Required for nuclear targeting" evidence="2">
    <location>
        <begin position="151"/>
        <end position="320"/>
    </location>
</feature>
<feature type="compositionally biased region" description="Acidic residues" evidence="6">
    <location>
        <begin position="150"/>
        <end position="163"/>
    </location>
</feature>
<feature type="compositionally biased region" description="Basic residues" evidence="6">
    <location>
        <begin position="196"/>
        <end position="210"/>
    </location>
</feature>
<feature type="compositionally biased region" description="Low complexity" evidence="6">
    <location>
        <begin position="211"/>
        <end position="224"/>
    </location>
</feature>
<feature type="compositionally biased region" description="Low complexity" evidence="6">
    <location>
        <begin position="232"/>
        <end position="242"/>
    </location>
</feature>
<feature type="compositionally biased region" description="Basic residues" evidence="6">
    <location>
        <begin position="251"/>
        <end position="273"/>
    </location>
</feature>
<feature type="modified residue" description="Phosphoserine" evidence="2">
    <location>
        <position position="9"/>
    </location>
</feature>
<feature type="modified residue" description="N6-acetyllysine" evidence="3">
    <location>
        <position position="18"/>
    </location>
</feature>
<feature type="modified residue" description="N6-acetyllysine" evidence="2">
    <location>
        <position position="54"/>
    </location>
</feature>
<feature type="modified residue" description="N6-acetyllysine" evidence="3">
    <location>
        <position position="92"/>
    </location>
</feature>
<feature type="modified residue" description="Phosphoserine" evidence="2">
    <location>
        <position position="120"/>
    </location>
</feature>
<feature type="modified residue" description="Phosphoserine" evidence="2">
    <location>
        <position position="153"/>
    </location>
</feature>
<feature type="modified residue" description="Phosphoserine" evidence="2">
    <location>
        <position position="181"/>
    </location>
</feature>
<feature type="modified residue" description="Phosphoserine" evidence="2">
    <location>
        <position position="188"/>
    </location>
</feature>
<feature type="modified residue" description="Phosphoserine" evidence="2">
    <location>
        <position position="193"/>
    </location>
</feature>
<reference evidence="7" key="1">
    <citation type="submission" date="2004-11" db="EMBL/GenBank/DDBJ databases">
        <authorList>
            <consortium name="The German cDNA consortium"/>
        </authorList>
    </citation>
    <scope>NUCLEOTIDE SEQUENCE [LARGE SCALE MRNA]</scope>
    <source>
        <tissue evidence="7">Brain cortex</tissue>
    </source>
</reference>
<sequence>MSTKNFRVSDGDWICPDKKCGNVNFARRTSCNRCGREKTTEAKMMKAGGTEIGKTLAEKSRGLFSANDWQCKTCSNVNWARRSECNMCNTPKYAKLEERTGYGGGFNERENVEYIEREESDGEYDEFGRKKKKYRGKAVGPASILKEVEDKESEGEEEDEDEDLSKYKLDEDEDEDDADLSKYNLDASEEEDSNKKKSNRRSRSKSRSSHSRSSSRSSSPSSSRSRSRSRSRSSSSSQSRSRSSSRERSRSRGSKSRSSSRSHRGSSSPRKRSYSSSSSSPERNRKRSRSRSSSSGDRKKRRTRSRSPESQVIGENTKQP</sequence>
<evidence type="ECO:0000250" key="1"/>
<evidence type="ECO:0000250" key="2">
    <source>
        <dbReference type="UniProtKB" id="O95218"/>
    </source>
</evidence>
<evidence type="ECO:0000250" key="3">
    <source>
        <dbReference type="UniProtKB" id="Q9R020"/>
    </source>
</evidence>
<evidence type="ECO:0000255" key="4"/>
<evidence type="ECO:0000255" key="5">
    <source>
        <dbReference type="PROSITE-ProRule" id="PRU00322"/>
    </source>
</evidence>
<evidence type="ECO:0000256" key="6">
    <source>
        <dbReference type="SAM" id="MobiDB-lite"/>
    </source>
</evidence>
<evidence type="ECO:0000312" key="7">
    <source>
        <dbReference type="EMBL" id="CAH93086.1"/>
    </source>
</evidence>
<organism>
    <name type="scientific">Pongo abelii</name>
    <name type="common">Sumatran orangutan</name>
    <name type="synonym">Pongo pygmaeus abelii</name>
    <dbReference type="NCBI Taxonomy" id="9601"/>
    <lineage>
        <taxon>Eukaryota</taxon>
        <taxon>Metazoa</taxon>
        <taxon>Chordata</taxon>
        <taxon>Craniata</taxon>
        <taxon>Vertebrata</taxon>
        <taxon>Euteleostomi</taxon>
        <taxon>Mammalia</taxon>
        <taxon>Eutheria</taxon>
        <taxon>Euarchontoglires</taxon>
        <taxon>Primates</taxon>
        <taxon>Haplorrhini</taxon>
        <taxon>Catarrhini</taxon>
        <taxon>Hominidae</taxon>
        <taxon>Pongo</taxon>
    </lineage>
</organism>
<dbReference type="EMBL" id="CR860984">
    <property type="protein sequence ID" value="CAH93086.1"/>
    <property type="molecule type" value="mRNA"/>
</dbReference>
<dbReference type="RefSeq" id="NP_001127628.1">
    <property type="nucleotide sequence ID" value="NM_001134156.1"/>
</dbReference>
<dbReference type="SMR" id="Q5R580"/>
<dbReference type="STRING" id="9601.ENSPPYP00000001445"/>
<dbReference type="GeneID" id="100174707"/>
<dbReference type="KEGG" id="pon:100174707"/>
<dbReference type="CTD" id="9406"/>
<dbReference type="eggNOG" id="KOG1995">
    <property type="taxonomic scope" value="Eukaryota"/>
</dbReference>
<dbReference type="InParanoid" id="Q5R580"/>
<dbReference type="OrthoDB" id="1878647at2759"/>
<dbReference type="Proteomes" id="UP000001595">
    <property type="component" value="Unplaced"/>
</dbReference>
<dbReference type="GO" id="GO:0005634">
    <property type="term" value="C:nucleus"/>
    <property type="evidence" value="ECO:0007669"/>
    <property type="project" value="UniProtKB-SubCell"/>
</dbReference>
<dbReference type="GO" id="GO:0001530">
    <property type="term" value="F:lipopolysaccharide binding"/>
    <property type="evidence" value="ECO:0007669"/>
    <property type="project" value="TreeGrafter"/>
</dbReference>
<dbReference type="GO" id="GO:0003723">
    <property type="term" value="F:RNA binding"/>
    <property type="evidence" value="ECO:0007669"/>
    <property type="project" value="UniProtKB-KW"/>
</dbReference>
<dbReference type="GO" id="GO:0008270">
    <property type="term" value="F:zinc ion binding"/>
    <property type="evidence" value="ECO:0007669"/>
    <property type="project" value="UniProtKB-KW"/>
</dbReference>
<dbReference type="GO" id="GO:0006397">
    <property type="term" value="P:mRNA processing"/>
    <property type="evidence" value="ECO:0007669"/>
    <property type="project" value="UniProtKB-KW"/>
</dbReference>
<dbReference type="GO" id="GO:0008380">
    <property type="term" value="P:RNA splicing"/>
    <property type="evidence" value="ECO:0007669"/>
    <property type="project" value="UniProtKB-KW"/>
</dbReference>
<dbReference type="FunFam" id="4.10.1060.10:FF:000004">
    <property type="entry name" value="Zinc finger Ran-binding domain-containing protein 2"/>
    <property type="match status" value="1"/>
</dbReference>
<dbReference type="FunFam" id="4.10.1060.10:FF:000007">
    <property type="entry name" value="Zinc finger Ran-binding domain-containing protein 2"/>
    <property type="match status" value="1"/>
</dbReference>
<dbReference type="Gene3D" id="4.10.1060.10">
    <property type="entry name" value="Zinc finger, RanBP2-type"/>
    <property type="match status" value="2"/>
</dbReference>
<dbReference type="InterPro" id="IPR001876">
    <property type="entry name" value="Znf_RanBP2"/>
</dbReference>
<dbReference type="InterPro" id="IPR036443">
    <property type="entry name" value="Znf_RanBP2_sf"/>
</dbReference>
<dbReference type="InterPro" id="IPR017337">
    <property type="entry name" value="ZRANB2"/>
</dbReference>
<dbReference type="PANTHER" id="PTHR12999:SF21">
    <property type="entry name" value="ZINC FINGER RAN-BINDING DOMAIN-CONTAINING PROTEIN 2"/>
    <property type="match status" value="1"/>
</dbReference>
<dbReference type="PANTHER" id="PTHR12999">
    <property type="entry name" value="ZINC FINGER RAN-BINDING DOMAIN-CONTAINING PROTEIN 2 ZRANB2-RELATED"/>
    <property type="match status" value="1"/>
</dbReference>
<dbReference type="Pfam" id="PF00641">
    <property type="entry name" value="Zn_ribbon_RanBP"/>
    <property type="match status" value="2"/>
</dbReference>
<dbReference type="PIRSF" id="PIRSF037956">
    <property type="entry name" value="UCP037956_ZnF_Ran"/>
    <property type="match status" value="1"/>
</dbReference>
<dbReference type="SMART" id="SM00547">
    <property type="entry name" value="ZnF_RBZ"/>
    <property type="match status" value="2"/>
</dbReference>
<dbReference type="SUPFAM" id="SSF90209">
    <property type="entry name" value="Ran binding protein zinc finger-like"/>
    <property type="match status" value="2"/>
</dbReference>
<dbReference type="PROSITE" id="PS01358">
    <property type="entry name" value="ZF_RANBP2_1"/>
    <property type="match status" value="2"/>
</dbReference>
<dbReference type="PROSITE" id="PS50199">
    <property type="entry name" value="ZF_RANBP2_2"/>
    <property type="match status" value="2"/>
</dbReference>
<keyword id="KW-0007">Acetylation</keyword>
<keyword id="KW-0479">Metal-binding</keyword>
<keyword id="KW-0507">mRNA processing</keyword>
<keyword id="KW-0508">mRNA splicing</keyword>
<keyword id="KW-0539">Nucleus</keyword>
<keyword id="KW-0597">Phosphoprotein</keyword>
<keyword id="KW-1185">Reference proteome</keyword>
<keyword id="KW-0677">Repeat</keyword>
<keyword id="KW-0694">RNA-binding</keyword>
<keyword id="KW-0862">Zinc</keyword>
<keyword id="KW-0863">Zinc-finger</keyword>
<name>ZRAB2_PONAB</name>
<gene>
    <name evidence="2" type="primary">ZRANB2</name>
    <name evidence="2" type="synonym">ZNF265</name>
</gene>
<protein>
    <recommendedName>
        <fullName>Zinc finger Ran-binding domain-containing protein 2</fullName>
    </recommendedName>
    <alternativeName>
        <fullName>Zinc finger protein 265</fullName>
    </alternativeName>
</protein>
<proteinExistence type="evidence at transcript level"/>